<organism>
    <name type="scientific">Shigella dysenteriae serotype 1 (strain Sd197)</name>
    <dbReference type="NCBI Taxonomy" id="300267"/>
    <lineage>
        <taxon>Bacteria</taxon>
        <taxon>Pseudomonadati</taxon>
        <taxon>Pseudomonadota</taxon>
        <taxon>Gammaproteobacteria</taxon>
        <taxon>Enterobacterales</taxon>
        <taxon>Enterobacteriaceae</taxon>
        <taxon>Shigella</taxon>
    </lineage>
</organism>
<keyword id="KW-0012">Acyltransferase</keyword>
<keyword id="KW-0997">Cell inner membrane</keyword>
<keyword id="KW-1003">Cell membrane</keyword>
<keyword id="KW-0444">Lipid biosynthesis</keyword>
<keyword id="KW-0443">Lipid metabolism</keyword>
<keyword id="KW-0472">Membrane</keyword>
<keyword id="KW-0594">Phospholipid biosynthesis</keyword>
<keyword id="KW-1208">Phospholipid metabolism</keyword>
<keyword id="KW-1185">Reference proteome</keyword>
<keyword id="KW-0808">Transferase</keyword>
<sequence>MTFCYPCRAFALLTRGFTSFMSGWPRIYYKLLNLPLSILVKSKSIPADPAPELGLDTSRPIMYVLPYNSKADLLTLRAQCLAHDLPDPLEPLEIDGTLLPRYVFIHGGPRVFTYYTPKEESIKLFHDYLDLHRSNPNLDVQMVPVSVMFGRAPGREKGEVNPPLRMLNGVQKFFAVLWLGRDSFVRFSPSVSLRRMADEHGTDKTIAQKLARVARMHFARQRLAAVGPRLPARQDLFNKLLASRAIAKAVEDEARSKKISHEKAQQNAIALMEEIAANFSYEMIRLTDRILGFTWNRLYQGINVHNAERVRQLAHDGHELVYVPCHRSHMDYLLLSYVLYHQGLVPPHIAAGINLNFWPAGPIFRRLGAFFIRRTFKGNKLYSTVFREYLGELFSRGYSVEYFVEGGRSRTGRLLDPKTGTLSMTIQAMLRGGTRPITLIPIYIGYEHVMEVGTYAKELRGATKEKESLPQMLRGLSKLRNLGQGYVNFGEPMPLMTYLNQHVPDWRESIDPIEAVRPAWLTPTVNNIAADLMVRINNAGAANAMNLCCTALLASRQRSLTREQLTEQLNCYLDLMRNVPYSTDSTVPSASASELIDHALQMNKFEVEKDTIGDIIILPREQAVLMTYYRNNIAHMLVLPSLMAAIVTQHRHISRDVLMEHVNVLYPMLKAELFLRWDRDELPDVIDALANEMQRQGLITLQDDELHINPAHSRTLQLLAAGARETLQRYAITFWLLSANPSINRGTLEKESRTVAQRLSVLHGINAPEFFDKAVFSSLVLTLRDEGYISDSGDAEPAETMKVYQLLAELITSDVRLTIESATQGEG</sequence>
<protein>
    <recommendedName>
        <fullName evidence="1">Glycerol-3-phosphate acyltransferase</fullName>
        <shortName evidence="1">GPAT</shortName>
        <ecNumber evidence="1">2.3.1.15</ecNumber>
    </recommendedName>
</protein>
<name>PLSB_SHIDS</name>
<proteinExistence type="inferred from homology"/>
<dbReference type="EC" id="2.3.1.15" evidence="1"/>
<dbReference type="EMBL" id="CP000034">
    <property type="protein sequence ID" value="ABB64407.1"/>
    <property type="molecule type" value="Genomic_DNA"/>
</dbReference>
<dbReference type="SMR" id="Q327U8"/>
<dbReference type="STRING" id="300267.SDY_4533"/>
<dbReference type="EnsemblBacteria" id="ABB64407">
    <property type="protein sequence ID" value="ABB64407"/>
    <property type="gene ID" value="SDY_4533"/>
</dbReference>
<dbReference type="KEGG" id="sdy:SDY_4533"/>
<dbReference type="HOGENOM" id="CLU_015407_0_0_6"/>
<dbReference type="UniPathway" id="UPA00557">
    <property type="reaction ID" value="UER00612"/>
</dbReference>
<dbReference type="Proteomes" id="UP000002716">
    <property type="component" value="Chromosome"/>
</dbReference>
<dbReference type="GO" id="GO:0005886">
    <property type="term" value="C:plasma membrane"/>
    <property type="evidence" value="ECO:0007669"/>
    <property type="project" value="UniProtKB-SubCell"/>
</dbReference>
<dbReference type="GO" id="GO:0004366">
    <property type="term" value="F:glycerol-3-phosphate O-acyltransferase activity"/>
    <property type="evidence" value="ECO:0007669"/>
    <property type="project" value="UniProtKB-UniRule"/>
</dbReference>
<dbReference type="GO" id="GO:0016024">
    <property type="term" value="P:CDP-diacylglycerol biosynthetic process"/>
    <property type="evidence" value="ECO:0007669"/>
    <property type="project" value="UniProtKB-UniRule"/>
</dbReference>
<dbReference type="GO" id="GO:0006631">
    <property type="term" value="P:fatty acid metabolic process"/>
    <property type="evidence" value="ECO:0007669"/>
    <property type="project" value="TreeGrafter"/>
</dbReference>
<dbReference type="CDD" id="cd07993">
    <property type="entry name" value="LPLAT_DHAPAT-like"/>
    <property type="match status" value="1"/>
</dbReference>
<dbReference type="HAMAP" id="MF_00393">
    <property type="entry name" value="Glyc3P_acyltrans"/>
    <property type="match status" value="1"/>
</dbReference>
<dbReference type="InterPro" id="IPR022284">
    <property type="entry name" value="GPAT/DHAPAT"/>
</dbReference>
<dbReference type="InterPro" id="IPR045520">
    <property type="entry name" value="GPAT/DHAPAT_C"/>
</dbReference>
<dbReference type="InterPro" id="IPR041728">
    <property type="entry name" value="GPAT/DHAPAT_LPLAT"/>
</dbReference>
<dbReference type="InterPro" id="IPR028354">
    <property type="entry name" value="GPAT_PlsB"/>
</dbReference>
<dbReference type="InterPro" id="IPR002123">
    <property type="entry name" value="Plipid/glycerol_acylTrfase"/>
</dbReference>
<dbReference type="NCBIfam" id="TIGR03703">
    <property type="entry name" value="plsB"/>
    <property type="match status" value="1"/>
</dbReference>
<dbReference type="NCBIfam" id="NF003441">
    <property type="entry name" value="PRK04974.1"/>
    <property type="match status" value="1"/>
</dbReference>
<dbReference type="PANTHER" id="PTHR12563:SF17">
    <property type="entry name" value="DIHYDROXYACETONE PHOSPHATE ACYLTRANSFERASE"/>
    <property type="match status" value="1"/>
</dbReference>
<dbReference type="PANTHER" id="PTHR12563">
    <property type="entry name" value="GLYCEROL-3-PHOSPHATE ACYLTRANSFERASE"/>
    <property type="match status" value="1"/>
</dbReference>
<dbReference type="Pfam" id="PF01553">
    <property type="entry name" value="Acyltransferase"/>
    <property type="match status" value="1"/>
</dbReference>
<dbReference type="Pfam" id="PF19277">
    <property type="entry name" value="GPAT_C"/>
    <property type="match status" value="1"/>
</dbReference>
<dbReference type="PIRSF" id="PIRSF500064">
    <property type="entry name" value="GPAT"/>
    <property type="match status" value="1"/>
</dbReference>
<dbReference type="PIRSF" id="PIRSF000437">
    <property type="entry name" value="GPAT_DHAPAT"/>
    <property type="match status" value="1"/>
</dbReference>
<dbReference type="SMART" id="SM00563">
    <property type="entry name" value="PlsC"/>
    <property type="match status" value="1"/>
</dbReference>
<dbReference type="SUPFAM" id="SSF69593">
    <property type="entry name" value="Glycerol-3-phosphate (1)-acyltransferase"/>
    <property type="match status" value="1"/>
</dbReference>
<evidence type="ECO:0000255" key="1">
    <source>
        <dbReference type="HAMAP-Rule" id="MF_00393"/>
    </source>
</evidence>
<feature type="chain" id="PRO_1000049465" description="Glycerol-3-phosphate acyltransferase">
    <location>
        <begin position="1"/>
        <end position="827"/>
    </location>
</feature>
<feature type="short sequence motif" description="HXXXXD motif">
    <location>
        <begin position="325"/>
        <end position="330"/>
    </location>
</feature>
<reference key="1">
    <citation type="journal article" date="2005" name="Nucleic Acids Res.">
        <title>Genome dynamics and diversity of Shigella species, the etiologic agents of bacillary dysentery.</title>
        <authorList>
            <person name="Yang F."/>
            <person name="Yang J."/>
            <person name="Zhang X."/>
            <person name="Chen L."/>
            <person name="Jiang Y."/>
            <person name="Yan Y."/>
            <person name="Tang X."/>
            <person name="Wang J."/>
            <person name="Xiong Z."/>
            <person name="Dong J."/>
            <person name="Xue Y."/>
            <person name="Zhu Y."/>
            <person name="Xu X."/>
            <person name="Sun L."/>
            <person name="Chen S."/>
            <person name="Nie H."/>
            <person name="Peng J."/>
            <person name="Xu J."/>
            <person name="Wang Y."/>
            <person name="Yuan Z."/>
            <person name="Wen Y."/>
            <person name="Yao Z."/>
            <person name="Shen Y."/>
            <person name="Qiang B."/>
            <person name="Hou Y."/>
            <person name="Yu J."/>
            <person name="Jin Q."/>
        </authorList>
    </citation>
    <scope>NUCLEOTIDE SEQUENCE [LARGE SCALE GENOMIC DNA]</scope>
    <source>
        <strain>Sd197</strain>
    </source>
</reference>
<accession>Q327U8</accession>
<comment type="catalytic activity">
    <reaction evidence="1">
        <text>sn-glycerol 3-phosphate + an acyl-CoA = a 1-acyl-sn-glycero-3-phosphate + CoA</text>
        <dbReference type="Rhea" id="RHEA:15325"/>
        <dbReference type="ChEBI" id="CHEBI:57287"/>
        <dbReference type="ChEBI" id="CHEBI:57597"/>
        <dbReference type="ChEBI" id="CHEBI:57970"/>
        <dbReference type="ChEBI" id="CHEBI:58342"/>
        <dbReference type="EC" id="2.3.1.15"/>
    </reaction>
</comment>
<comment type="pathway">
    <text evidence="1">Phospholipid metabolism; CDP-diacylglycerol biosynthesis; CDP-diacylglycerol from sn-glycerol 3-phosphate: step 1/3.</text>
</comment>
<comment type="subcellular location">
    <subcellularLocation>
        <location evidence="1">Cell inner membrane</location>
        <topology evidence="1">Peripheral membrane protein</topology>
        <orientation evidence="1">Cytoplasmic side</orientation>
    </subcellularLocation>
</comment>
<comment type="domain">
    <text evidence="1">The HXXXXD motif is essential for acyltransferase activity and may constitute the binding site for the phosphate moiety of the glycerol-3-phosphate.</text>
</comment>
<comment type="similarity">
    <text evidence="1">Belongs to the GPAT/DAPAT family.</text>
</comment>
<gene>
    <name evidence="1" type="primary">plsB</name>
    <name type="ordered locus">SDY_4533</name>
</gene>